<gene>
    <name type="primary">MLO1</name>
    <name type="synonym">MLO-H1</name>
    <name type="ORF">OsI_022215</name>
</gene>
<organism>
    <name type="scientific">Oryza sativa subsp. indica</name>
    <name type="common">Rice</name>
    <dbReference type="NCBI Taxonomy" id="39946"/>
    <lineage>
        <taxon>Eukaryota</taxon>
        <taxon>Viridiplantae</taxon>
        <taxon>Streptophyta</taxon>
        <taxon>Embryophyta</taxon>
        <taxon>Tracheophyta</taxon>
        <taxon>Spermatophyta</taxon>
        <taxon>Magnoliopsida</taxon>
        <taxon>Liliopsida</taxon>
        <taxon>Poales</taxon>
        <taxon>Poaceae</taxon>
        <taxon>BOP clade</taxon>
        <taxon>Oryzoideae</taxon>
        <taxon>Oryzeae</taxon>
        <taxon>Oryzinae</taxon>
        <taxon>Oryza</taxon>
        <taxon>Oryza sativa</taxon>
    </lineage>
</organism>
<feature type="chain" id="PRO_0000300236" description="MLO protein homolog 1">
    <location>
        <begin position="1"/>
        <end position="540"/>
    </location>
</feature>
<feature type="topological domain" description="Extracellular" evidence="2">
    <location>
        <begin position="1"/>
        <end position="16"/>
    </location>
</feature>
<feature type="transmembrane region" description="Helical; Name=1" evidence="2">
    <location>
        <begin position="17"/>
        <end position="37"/>
    </location>
</feature>
<feature type="topological domain" description="Cytoplasmic" evidence="2">
    <location>
        <begin position="38"/>
        <end position="60"/>
    </location>
</feature>
<feature type="transmembrane region" description="Helical; Name=2" evidence="2">
    <location>
        <begin position="61"/>
        <end position="81"/>
    </location>
</feature>
<feature type="topological domain" description="Extracellular" evidence="2">
    <location>
        <begin position="82"/>
        <end position="142"/>
    </location>
</feature>
<feature type="transmembrane region" description="Helical; Name=3" evidence="2">
    <location>
        <begin position="143"/>
        <end position="163"/>
    </location>
</feature>
<feature type="topological domain" description="Cytoplasmic" evidence="2">
    <location>
        <begin position="164"/>
        <end position="265"/>
    </location>
</feature>
<feature type="transmembrane region" description="Helical; Name=4" evidence="2">
    <location>
        <begin position="266"/>
        <end position="286"/>
    </location>
</feature>
<feature type="topological domain" description="Extracellular" evidence="2">
    <location>
        <position position="287"/>
    </location>
</feature>
<feature type="transmembrane region" description="Helical; Name=5" evidence="2">
    <location>
        <begin position="288"/>
        <end position="308"/>
    </location>
</feature>
<feature type="topological domain" description="Cytoplasmic" evidence="2">
    <location>
        <begin position="309"/>
        <end position="347"/>
    </location>
</feature>
<feature type="transmembrane region" description="Helical; Name=6" evidence="2">
    <location>
        <begin position="348"/>
        <end position="368"/>
    </location>
</feature>
<feature type="topological domain" description="Extracellular" evidence="2">
    <location>
        <begin position="369"/>
        <end position="383"/>
    </location>
</feature>
<feature type="transmembrane region" description="Helical; Name=7" evidence="2">
    <location>
        <begin position="384"/>
        <end position="404"/>
    </location>
</feature>
<feature type="topological domain" description="Cytoplasmic" evidence="2">
    <location>
        <begin position="405"/>
        <end position="540"/>
    </location>
</feature>
<feature type="region of interest" description="Calmodulin-binding">
    <location>
        <begin position="426"/>
        <end position="447"/>
    </location>
</feature>
<feature type="region of interest" description="Disordered" evidence="3">
    <location>
        <begin position="468"/>
        <end position="526"/>
    </location>
</feature>
<feature type="compositionally biased region" description="Basic and acidic residues" evidence="3">
    <location>
        <begin position="474"/>
        <end position="483"/>
    </location>
</feature>
<feature type="compositionally biased region" description="Basic and acidic residues" evidence="3">
    <location>
        <begin position="512"/>
        <end position="521"/>
    </location>
</feature>
<keyword id="KW-0112">Calmodulin-binding</keyword>
<keyword id="KW-0472">Membrane</keyword>
<keyword id="KW-0568">Pathogenesis-related protein</keyword>
<keyword id="KW-0611">Plant defense</keyword>
<keyword id="KW-1185">Reference proteome</keyword>
<keyword id="KW-0812">Transmembrane</keyword>
<keyword id="KW-1133">Transmembrane helix</keyword>
<sequence length="540" mass="60707">MAGGRSGSRELPETPTWAVAVVCAVLVLVSAAMEHGLHNLSHWFRRRQKKAMGDALDKIKAELMLLGFISLLLTVAQAPISKICIPKSAANILLPCKAGQDAIEEEAASGRRSLAGAGGGDYCSKFDGKVALMSAKSMHQLHIFIFVLAVFHVTYCIITMGLGRLKMKKWKKWESQTNSLEYQFAIDPSRFRFTHQTSFVKRHLGSFSSTPGLRWIVAFFRQFFGSVTKVDYLTMRQGFINAHLSQNSKFDFHKYIKRSLEDDFKVVVGISLPLWFVGILVLFLDIHGLGTLIWISFVPLIIVLLVGTKLEMVIMEMAQEIQDRATVIQGAPMVEPSNKYFWFNRPDWVLFFIHLTLFHNAFQMAHFVWTMATPGLKKCFHENIWLSIVEVIVGISLQVLCSYITFPLYALVTQMGSNMKKTIFEEQTMKALMNWRKKAMEKKKVRDADAFLAQMSVDFATPASSRSASPVHLLQDHRARSDDPPSPITVASPPAPEEDMYPVPAAAASRQLLDDPPDRRWMASSSADIADSDFSFSAQR</sequence>
<dbReference type="EMBL" id="Z95353">
    <property type="protein sequence ID" value="CAB08606.2"/>
    <property type="molecule type" value="Genomic_DNA"/>
</dbReference>
<dbReference type="EMBL" id="CM000131">
    <property type="status" value="NOT_ANNOTATED_CDS"/>
    <property type="molecule type" value="Genomic_DNA"/>
</dbReference>
<dbReference type="PIR" id="T03797">
    <property type="entry name" value="T03797"/>
</dbReference>
<dbReference type="SMR" id="A2YD22"/>
<dbReference type="STRING" id="39946.A2YD22"/>
<dbReference type="Proteomes" id="UP000007015">
    <property type="component" value="Chromosome 6"/>
</dbReference>
<dbReference type="GO" id="GO:0016020">
    <property type="term" value="C:membrane"/>
    <property type="evidence" value="ECO:0007669"/>
    <property type="project" value="UniProtKB-SubCell"/>
</dbReference>
<dbReference type="GO" id="GO:0005516">
    <property type="term" value="F:calmodulin binding"/>
    <property type="evidence" value="ECO:0007669"/>
    <property type="project" value="UniProtKB-KW"/>
</dbReference>
<dbReference type="GO" id="GO:0006952">
    <property type="term" value="P:defense response"/>
    <property type="evidence" value="ECO:0007669"/>
    <property type="project" value="UniProtKB-KW"/>
</dbReference>
<dbReference type="InterPro" id="IPR004326">
    <property type="entry name" value="Mlo"/>
</dbReference>
<dbReference type="PANTHER" id="PTHR31942:SF82">
    <property type="entry name" value="MLO PROTEIN HOMOLOG 1"/>
    <property type="match status" value="1"/>
</dbReference>
<dbReference type="PANTHER" id="PTHR31942">
    <property type="entry name" value="MLO-LIKE PROTEIN 1"/>
    <property type="match status" value="1"/>
</dbReference>
<dbReference type="Pfam" id="PF03094">
    <property type="entry name" value="Mlo"/>
    <property type="match status" value="1"/>
</dbReference>
<reference key="1">
    <citation type="journal article" date="2003" name="J. Mol. Evol.">
        <title>Molecular phylogeny and evolution of the plant-specific seven-transmembrane MLO family.</title>
        <authorList>
            <person name="Devoto A."/>
            <person name="Hartmann H.A."/>
            <person name="Piffanelli P."/>
            <person name="Elliott C."/>
            <person name="Simmons C."/>
            <person name="Taramino G."/>
            <person name="Goh C.-S."/>
            <person name="Cohen F.E."/>
            <person name="Emerson B.C."/>
            <person name="Schulze-Lefert P."/>
            <person name="Panstruga R."/>
        </authorList>
    </citation>
    <scope>NUCLEOTIDE SEQUENCE [GENOMIC DNA]</scope>
    <source>
        <strain>cv. IRBB21</strain>
    </source>
</reference>
<reference key="2">
    <citation type="journal article" date="2005" name="PLoS Biol.">
        <title>The genomes of Oryza sativa: a history of duplications.</title>
        <authorList>
            <person name="Yu J."/>
            <person name="Wang J."/>
            <person name="Lin W."/>
            <person name="Li S."/>
            <person name="Li H."/>
            <person name="Zhou J."/>
            <person name="Ni P."/>
            <person name="Dong W."/>
            <person name="Hu S."/>
            <person name="Zeng C."/>
            <person name="Zhang J."/>
            <person name="Zhang Y."/>
            <person name="Li R."/>
            <person name="Xu Z."/>
            <person name="Li S."/>
            <person name="Li X."/>
            <person name="Zheng H."/>
            <person name="Cong L."/>
            <person name="Lin L."/>
            <person name="Yin J."/>
            <person name="Geng J."/>
            <person name="Li G."/>
            <person name="Shi J."/>
            <person name="Liu J."/>
            <person name="Lv H."/>
            <person name="Li J."/>
            <person name="Wang J."/>
            <person name="Deng Y."/>
            <person name="Ran L."/>
            <person name="Shi X."/>
            <person name="Wang X."/>
            <person name="Wu Q."/>
            <person name="Li C."/>
            <person name="Ren X."/>
            <person name="Wang J."/>
            <person name="Wang X."/>
            <person name="Li D."/>
            <person name="Liu D."/>
            <person name="Zhang X."/>
            <person name="Ji Z."/>
            <person name="Zhao W."/>
            <person name="Sun Y."/>
            <person name="Zhang Z."/>
            <person name="Bao J."/>
            <person name="Han Y."/>
            <person name="Dong L."/>
            <person name="Ji J."/>
            <person name="Chen P."/>
            <person name="Wu S."/>
            <person name="Liu J."/>
            <person name="Xiao Y."/>
            <person name="Bu D."/>
            <person name="Tan J."/>
            <person name="Yang L."/>
            <person name="Ye C."/>
            <person name="Zhang J."/>
            <person name="Xu J."/>
            <person name="Zhou Y."/>
            <person name="Yu Y."/>
            <person name="Zhang B."/>
            <person name="Zhuang S."/>
            <person name="Wei H."/>
            <person name="Liu B."/>
            <person name="Lei M."/>
            <person name="Yu H."/>
            <person name="Li Y."/>
            <person name="Xu H."/>
            <person name="Wei S."/>
            <person name="He X."/>
            <person name="Fang L."/>
            <person name="Zhang Z."/>
            <person name="Zhang Y."/>
            <person name="Huang X."/>
            <person name="Su Z."/>
            <person name="Tong W."/>
            <person name="Li J."/>
            <person name="Tong Z."/>
            <person name="Li S."/>
            <person name="Ye J."/>
            <person name="Wang L."/>
            <person name="Fang L."/>
            <person name="Lei T."/>
            <person name="Chen C.-S."/>
            <person name="Chen H.-C."/>
            <person name="Xu Z."/>
            <person name="Li H."/>
            <person name="Huang H."/>
            <person name="Zhang F."/>
            <person name="Xu H."/>
            <person name="Li N."/>
            <person name="Zhao C."/>
            <person name="Li S."/>
            <person name="Dong L."/>
            <person name="Huang Y."/>
            <person name="Li L."/>
            <person name="Xi Y."/>
            <person name="Qi Q."/>
            <person name="Li W."/>
            <person name="Zhang B."/>
            <person name="Hu W."/>
            <person name="Zhang Y."/>
            <person name="Tian X."/>
            <person name="Jiao Y."/>
            <person name="Liang X."/>
            <person name="Jin J."/>
            <person name="Gao L."/>
            <person name="Zheng W."/>
            <person name="Hao B."/>
            <person name="Liu S.-M."/>
            <person name="Wang W."/>
            <person name="Yuan L."/>
            <person name="Cao M."/>
            <person name="McDermott J."/>
            <person name="Samudrala R."/>
            <person name="Wang J."/>
            <person name="Wong G.K.-S."/>
            <person name="Yang H."/>
        </authorList>
    </citation>
    <scope>NUCLEOTIDE SEQUENCE [LARGE SCALE GENOMIC DNA]</scope>
    <source>
        <strain>cv. 93-11</strain>
    </source>
</reference>
<protein>
    <recommendedName>
        <fullName>MLO protein homolog 1</fullName>
    </recommendedName>
    <alternativeName>
        <fullName>OsMLO1</fullName>
    </alternativeName>
</protein>
<evidence type="ECO:0000250" key="1"/>
<evidence type="ECO:0000255" key="2"/>
<evidence type="ECO:0000256" key="3">
    <source>
        <dbReference type="SAM" id="MobiDB-lite"/>
    </source>
</evidence>
<evidence type="ECO:0000305" key="4"/>
<accession>A2YD22</accession>
<accession>O49914</accession>
<accession>Q67W42</accession>
<accession>Q84TU0</accession>
<proteinExistence type="inferred from homology"/>
<name>MLOH1_ORYSI</name>
<comment type="function">
    <text evidence="1">May be involved in modulation of pathogen defense and leaf cell death. Activity seems to be regulated by Ca(2+)-dependent calmodulin binding and seems not to require heterotrimeric G proteins (By similarity).</text>
</comment>
<comment type="subcellular location">
    <subcellularLocation>
        <location evidence="1">Membrane</location>
        <topology evidence="1">Multi-pass membrane protein</topology>
    </subcellularLocation>
</comment>
<comment type="domain">
    <text evidence="1">The C-terminus contains a calmodulin-binding domain, which binds calmodulin in a calcium-dependent fashion.</text>
</comment>
<comment type="similarity">
    <text evidence="4">Belongs to the MLO family.</text>
</comment>